<dbReference type="EC" id="3.4.25.1" evidence="1"/>
<dbReference type="EMBL" id="FN554889">
    <property type="protein sequence ID" value="CBG74332.1"/>
    <property type="molecule type" value="Genomic_DNA"/>
</dbReference>
<dbReference type="RefSeq" id="WP_013004872.1">
    <property type="nucleotide sequence ID" value="NC_013929.1"/>
</dbReference>
<dbReference type="SMR" id="C9Z4D0"/>
<dbReference type="STRING" id="680198.SCAB_73471"/>
<dbReference type="MEROPS" id="T01.005"/>
<dbReference type="GeneID" id="24307939"/>
<dbReference type="KEGG" id="scb:SCAB_73471"/>
<dbReference type="eggNOG" id="COG0638">
    <property type="taxonomic scope" value="Bacteria"/>
</dbReference>
<dbReference type="HOGENOM" id="CLU_035750_2_0_11"/>
<dbReference type="UniPathway" id="UPA00997"/>
<dbReference type="Proteomes" id="UP000001444">
    <property type="component" value="Chromosome"/>
</dbReference>
<dbReference type="GO" id="GO:0005737">
    <property type="term" value="C:cytoplasm"/>
    <property type="evidence" value="ECO:0007669"/>
    <property type="project" value="UniProtKB-SubCell"/>
</dbReference>
<dbReference type="GO" id="GO:0019774">
    <property type="term" value="C:proteasome core complex, beta-subunit complex"/>
    <property type="evidence" value="ECO:0007669"/>
    <property type="project" value="UniProtKB-UniRule"/>
</dbReference>
<dbReference type="GO" id="GO:0004298">
    <property type="term" value="F:threonine-type endopeptidase activity"/>
    <property type="evidence" value="ECO:0007669"/>
    <property type="project" value="UniProtKB-UniRule"/>
</dbReference>
<dbReference type="GO" id="GO:0019941">
    <property type="term" value="P:modification-dependent protein catabolic process"/>
    <property type="evidence" value="ECO:0007669"/>
    <property type="project" value="UniProtKB-UniRule"/>
</dbReference>
<dbReference type="GO" id="GO:0010498">
    <property type="term" value="P:proteasomal protein catabolic process"/>
    <property type="evidence" value="ECO:0007669"/>
    <property type="project" value="UniProtKB-UniRule"/>
</dbReference>
<dbReference type="CDD" id="cd01906">
    <property type="entry name" value="proteasome_protease_HslV"/>
    <property type="match status" value="1"/>
</dbReference>
<dbReference type="FunFam" id="3.60.20.10:FF:000046">
    <property type="entry name" value="Proteasome subunit beta"/>
    <property type="match status" value="1"/>
</dbReference>
<dbReference type="Gene3D" id="3.60.20.10">
    <property type="entry name" value="Glutamine Phosphoribosylpyrophosphate, subunit 1, domain 1"/>
    <property type="match status" value="1"/>
</dbReference>
<dbReference type="HAMAP" id="MF_02113_B">
    <property type="entry name" value="Proteasome_B_B"/>
    <property type="match status" value="1"/>
</dbReference>
<dbReference type="InterPro" id="IPR029055">
    <property type="entry name" value="Ntn_hydrolases_N"/>
</dbReference>
<dbReference type="InterPro" id="IPR000243">
    <property type="entry name" value="Pept_T1A_subB"/>
</dbReference>
<dbReference type="InterPro" id="IPR001353">
    <property type="entry name" value="Proteasome_sua/b"/>
</dbReference>
<dbReference type="InterPro" id="IPR023333">
    <property type="entry name" value="Proteasome_suB-type"/>
</dbReference>
<dbReference type="InterPro" id="IPR022483">
    <property type="entry name" value="PSB_actinobac"/>
</dbReference>
<dbReference type="NCBIfam" id="TIGR03690">
    <property type="entry name" value="20S_bact_beta"/>
    <property type="match status" value="1"/>
</dbReference>
<dbReference type="PANTHER" id="PTHR32194:SF0">
    <property type="entry name" value="ATP-DEPENDENT PROTEASE SUBUNIT HSLV"/>
    <property type="match status" value="1"/>
</dbReference>
<dbReference type="PANTHER" id="PTHR32194">
    <property type="entry name" value="METALLOPROTEASE TLDD"/>
    <property type="match status" value="1"/>
</dbReference>
<dbReference type="Pfam" id="PF00227">
    <property type="entry name" value="Proteasome"/>
    <property type="match status" value="1"/>
</dbReference>
<dbReference type="PRINTS" id="PR00141">
    <property type="entry name" value="PROTEASOME"/>
</dbReference>
<dbReference type="SUPFAM" id="SSF56235">
    <property type="entry name" value="N-terminal nucleophile aminohydrolases (Ntn hydrolases)"/>
    <property type="match status" value="1"/>
</dbReference>
<dbReference type="PROSITE" id="PS51476">
    <property type="entry name" value="PROTEASOME_BETA_2"/>
    <property type="match status" value="1"/>
</dbReference>
<reference key="1">
    <citation type="journal article" date="2010" name="Mol. Plant Microbe Interact.">
        <title>Streptomyces scabies 87-22 contains a coronafacic acid-like biosynthetic cluster that contributes to plant-microbe interactions.</title>
        <authorList>
            <person name="Bignell D.R."/>
            <person name="Seipke R.F."/>
            <person name="Huguet-Tapia J.C."/>
            <person name="Chambers A.H."/>
            <person name="Parry R.J."/>
            <person name="Loria R."/>
        </authorList>
    </citation>
    <scope>NUCLEOTIDE SEQUENCE [LARGE SCALE GENOMIC DNA]</scope>
    <source>
        <strain>87.22</strain>
    </source>
</reference>
<proteinExistence type="inferred from homology"/>
<comment type="function">
    <text evidence="1">Component of the proteasome core, a large protease complex with broad specificity involved in protein degradation.</text>
</comment>
<comment type="catalytic activity">
    <reaction evidence="1">
        <text>Cleavage of peptide bonds with very broad specificity.</text>
        <dbReference type="EC" id="3.4.25.1"/>
    </reaction>
</comment>
<comment type="activity regulation">
    <text evidence="1">The formation of the proteasomal ATPase ARC-20S proteasome complex, likely via the docking of the C-termini of ARC into the intersubunit pockets in the alpha-rings, may trigger opening of the gate for substrate entry. Interconversion between the open-gate and close-gate conformations leads to a dynamic regulation of the 20S proteasome proteolysis activity.</text>
</comment>
<comment type="pathway">
    <text evidence="1">Protein degradation; proteasomal Pup-dependent pathway.</text>
</comment>
<comment type="subunit">
    <text evidence="1">The 20S proteasome core is composed of 14 alpha and 14 beta subunits that assemble into four stacked heptameric rings, resulting in a barrel-shaped structure. The two inner rings, each composed of seven catalytic beta subunits, are sandwiched by two outer rings, each composed of seven alpha subunits. The catalytic chamber with the active sites is on the inside of the barrel. Has a gated structure, the ends of the cylinder being occluded by the N-termini of the alpha-subunits. Is capped by the proteasome-associated ATPase, ARC.</text>
</comment>
<comment type="subcellular location">
    <subcellularLocation>
        <location evidence="1">Cytoplasm</location>
    </subcellularLocation>
</comment>
<comment type="similarity">
    <text evidence="1">Belongs to the peptidase T1B family.</text>
</comment>
<organism>
    <name type="scientific">Streptomyces scabiei (strain 87.22)</name>
    <dbReference type="NCBI Taxonomy" id="680198"/>
    <lineage>
        <taxon>Bacteria</taxon>
        <taxon>Bacillati</taxon>
        <taxon>Actinomycetota</taxon>
        <taxon>Actinomycetes</taxon>
        <taxon>Kitasatosporales</taxon>
        <taxon>Streptomycetaceae</taxon>
        <taxon>Streptomyces</taxon>
    </lineage>
</organism>
<gene>
    <name evidence="1" type="primary">prcB</name>
    <name type="ordered locus">SCAB_73471</name>
</gene>
<name>PSB_STRSW</name>
<feature type="propeptide" id="PRO_0000397590" description="Removed in mature form; by autocatalysis" evidence="1">
    <location>
        <begin position="1"/>
        <end position="53"/>
    </location>
</feature>
<feature type="chain" id="PRO_0000397591" description="Proteasome subunit beta">
    <location>
        <begin position="54"/>
        <end position="281"/>
    </location>
</feature>
<feature type="active site" description="Nucleophile" evidence="1">
    <location>
        <position position="54"/>
    </location>
</feature>
<accession>C9Z4D0</accession>
<keyword id="KW-0068">Autocatalytic cleavage</keyword>
<keyword id="KW-0963">Cytoplasm</keyword>
<keyword id="KW-0378">Hydrolase</keyword>
<keyword id="KW-0645">Protease</keyword>
<keyword id="KW-0647">Proteasome</keyword>
<keyword id="KW-1185">Reference proteome</keyword>
<keyword id="KW-0888">Threonine protease</keyword>
<keyword id="KW-0865">Zymogen</keyword>
<evidence type="ECO:0000255" key="1">
    <source>
        <dbReference type="HAMAP-Rule" id="MF_02113"/>
    </source>
</evidence>
<protein>
    <recommendedName>
        <fullName evidence="1">Proteasome subunit beta</fullName>
        <ecNumber evidence="1">3.4.25.1</ecNumber>
    </recommendedName>
    <alternativeName>
        <fullName evidence="1">20S proteasome beta subunit</fullName>
    </alternativeName>
    <alternativeName>
        <fullName evidence="1">Proteasome core protein PrcB</fullName>
    </alternativeName>
</protein>
<sequence length="281" mass="30140">MEANTRSTGRLPAAFLTPGSSSFMDFLSDHQPELLPGKRQLPPTQGVIEAPHGTTIVAVTFPGGVVLAGDRRATMGNMIAQRDIEKVFPADEYSAVGIAGTAGLAVEMVKLFQLELEHFEKVEGAQLSLEGKANRLSTMIRSNLGMAMQGLAVVPLFAGYDVDRNRGRIFSYDVTGGRSEESGYAATGSGSIFARGAMKKLFRADLSEADATTLVVQALYDAADDDSATGGPDVARRIYPIVTVITEDGFRRLTDEESSEIARSILERRLEQPDGPRAALL</sequence>